<comment type="subcellular location">
    <subcellularLocation>
        <location evidence="1">Cell membrane</location>
        <topology evidence="1">Multi-pass membrane protein</topology>
    </subcellularLocation>
</comment>
<comment type="similarity">
    <text evidence="1">Belongs to the UPF0344 family.</text>
</comment>
<keyword id="KW-1003">Cell membrane</keyword>
<keyword id="KW-0472">Membrane</keyword>
<keyword id="KW-0812">Transmembrane</keyword>
<keyword id="KW-1133">Transmembrane helix</keyword>
<organism>
    <name type="scientific">Bacillus mycoides (strain KBAB4)</name>
    <name type="common">Bacillus weihenstephanensis</name>
    <dbReference type="NCBI Taxonomy" id="315730"/>
    <lineage>
        <taxon>Bacteria</taxon>
        <taxon>Bacillati</taxon>
        <taxon>Bacillota</taxon>
        <taxon>Bacilli</taxon>
        <taxon>Bacillales</taxon>
        <taxon>Bacillaceae</taxon>
        <taxon>Bacillus</taxon>
        <taxon>Bacillus cereus group</taxon>
    </lineage>
</organism>
<reference key="1">
    <citation type="journal article" date="2008" name="Chem. Biol. Interact.">
        <title>Extending the Bacillus cereus group genomics to putative food-borne pathogens of different toxicity.</title>
        <authorList>
            <person name="Lapidus A."/>
            <person name="Goltsman E."/>
            <person name="Auger S."/>
            <person name="Galleron N."/>
            <person name="Segurens B."/>
            <person name="Dossat C."/>
            <person name="Land M.L."/>
            <person name="Broussolle V."/>
            <person name="Brillard J."/>
            <person name="Guinebretiere M.-H."/>
            <person name="Sanchis V."/>
            <person name="Nguen-the C."/>
            <person name="Lereclus D."/>
            <person name="Richardson P."/>
            <person name="Wincker P."/>
            <person name="Weissenbach J."/>
            <person name="Ehrlich S.D."/>
            <person name="Sorokin A."/>
        </authorList>
    </citation>
    <scope>NUCLEOTIDE SEQUENCE [LARGE SCALE GENOMIC DNA]</scope>
    <source>
        <strain>KBAB4</strain>
    </source>
</reference>
<evidence type="ECO:0000255" key="1">
    <source>
        <dbReference type="HAMAP-Rule" id="MF_01536"/>
    </source>
</evidence>
<gene>
    <name type="ordered locus">BcerKBAB4_1054</name>
</gene>
<feature type="chain" id="PRO_1000198642" description="UPF0344 protein BcerKBAB4_1054">
    <location>
        <begin position="1"/>
        <end position="122"/>
    </location>
</feature>
<feature type="transmembrane region" description="Helical" evidence="1">
    <location>
        <begin position="6"/>
        <end position="26"/>
    </location>
</feature>
<feature type="transmembrane region" description="Helical" evidence="1">
    <location>
        <begin position="38"/>
        <end position="58"/>
    </location>
</feature>
<feature type="transmembrane region" description="Helical" evidence="1">
    <location>
        <begin position="65"/>
        <end position="85"/>
    </location>
</feature>
<feature type="transmembrane region" description="Helical" evidence="1">
    <location>
        <begin position="92"/>
        <end position="112"/>
    </location>
</feature>
<proteinExistence type="inferred from homology"/>
<protein>
    <recommendedName>
        <fullName evidence="1">UPF0344 protein BcerKBAB4_1054</fullName>
    </recommendedName>
</protein>
<accession>A9VJ15</accession>
<name>Y1054_BACMK</name>
<dbReference type="EMBL" id="CP000903">
    <property type="protein sequence ID" value="ABY42304.1"/>
    <property type="molecule type" value="Genomic_DNA"/>
</dbReference>
<dbReference type="RefSeq" id="WP_002011256.1">
    <property type="nucleotide sequence ID" value="NC_010184.1"/>
</dbReference>
<dbReference type="KEGG" id="bwe:BcerKBAB4_1054"/>
<dbReference type="HOGENOM" id="CLU_146641_1_1_9"/>
<dbReference type="Proteomes" id="UP000002154">
    <property type="component" value="Chromosome"/>
</dbReference>
<dbReference type="GO" id="GO:0005886">
    <property type="term" value="C:plasma membrane"/>
    <property type="evidence" value="ECO:0007669"/>
    <property type="project" value="UniProtKB-SubCell"/>
</dbReference>
<dbReference type="HAMAP" id="MF_01536">
    <property type="entry name" value="UPF0344"/>
    <property type="match status" value="1"/>
</dbReference>
<dbReference type="InterPro" id="IPR010899">
    <property type="entry name" value="UPF0344"/>
</dbReference>
<dbReference type="NCBIfam" id="NF010194">
    <property type="entry name" value="PRK13673.1-1"/>
    <property type="match status" value="1"/>
</dbReference>
<dbReference type="Pfam" id="PF07457">
    <property type="entry name" value="DUF1516"/>
    <property type="match status" value="1"/>
</dbReference>
<sequence length="122" mass="13593">MVHMHITAWALGLILFFVAYSLYSAGRKGKGVHMGLRLMYIIIIVTGFMLYMSIVKTATGSMHMWYGMKMLAGILVIAGMEMVLVKMSKNKPTGAVWGLFIVALVAVLYLGLKLPLGWYVFK</sequence>